<reference key="1">
    <citation type="journal article" date="2002" name="Proc. Natl. Acad. Sci. U.S.A.">
        <title>Complete genome sequence of Clostridium perfringens, an anaerobic flesh-eater.</title>
        <authorList>
            <person name="Shimizu T."/>
            <person name="Ohtani K."/>
            <person name="Hirakawa H."/>
            <person name="Ohshima K."/>
            <person name="Yamashita A."/>
            <person name="Shiba T."/>
            <person name="Ogasawara N."/>
            <person name="Hattori M."/>
            <person name="Kuhara S."/>
            <person name="Hayashi H."/>
        </authorList>
    </citation>
    <scope>NUCLEOTIDE SEQUENCE [LARGE SCALE GENOMIC DNA]</scope>
    <source>
        <strain>13 / Type A</strain>
    </source>
</reference>
<evidence type="ECO:0000255" key="1">
    <source>
        <dbReference type="HAMAP-Rule" id="MF_00540"/>
    </source>
</evidence>
<accession>Q8XHH8</accession>
<organism>
    <name type="scientific">Clostridium perfringens (strain 13 / Type A)</name>
    <dbReference type="NCBI Taxonomy" id="195102"/>
    <lineage>
        <taxon>Bacteria</taxon>
        <taxon>Bacillati</taxon>
        <taxon>Bacillota</taxon>
        <taxon>Clostridia</taxon>
        <taxon>Eubacteriales</taxon>
        <taxon>Clostridiaceae</taxon>
        <taxon>Clostridium</taxon>
    </lineage>
</organism>
<sequence>MNLLNLPKIELHCHLDGSLRVETAIELAKKEGVKLDSYEYDKVKELLVIPKECNSLEDYLNRFALPVKLLQRAENLERVAFELMEDASKENVKYIEIRFAPLLHLEKGMTQKEVIESVIKGIRKAEELYDIKGNLILSCLRHHSIDSVYEVIEEGKNFIGKGVVAIDLAGGELEGFVKPYEEVMKLARESGFRVTIHAGETGYGKNVRDAIELLGAERIGHGLFIFNDEEAYNLVKEKGVTLEMCPKSNIDTKGVNKYEDHPIYKYHKDNIRVNLSTDNRTVSNINLTEEFENVHKTFNIDFEDYKKIYLNSVEASFCSEELKEKLKLSIII</sequence>
<protein>
    <recommendedName>
        <fullName evidence="1">Adenosine deaminase</fullName>
        <ecNumber evidence="1">3.5.4.4</ecNumber>
    </recommendedName>
    <alternativeName>
        <fullName evidence="1">Adenosine aminohydrolase</fullName>
    </alternativeName>
</protein>
<comment type="function">
    <text evidence="1">Catalyzes the hydrolytic deamination of adenosine and 2-deoxyadenosine.</text>
</comment>
<comment type="catalytic activity">
    <reaction evidence="1">
        <text>adenosine + H2O + H(+) = inosine + NH4(+)</text>
        <dbReference type="Rhea" id="RHEA:24408"/>
        <dbReference type="ChEBI" id="CHEBI:15377"/>
        <dbReference type="ChEBI" id="CHEBI:15378"/>
        <dbReference type="ChEBI" id="CHEBI:16335"/>
        <dbReference type="ChEBI" id="CHEBI:17596"/>
        <dbReference type="ChEBI" id="CHEBI:28938"/>
        <dbReference type="EC" id="3.5.4.4"/>
    </reaction>
    <physiologicalReaction direction="left-to-right" evidence="1">
        <dbReference type="Rhea" id="RHEA:24409"/>
    </physiologicalReaction>
</comment>
<comment type="catalytic activity">
    <reaction evidence="1">
        <text>2'-deoxyadenosine + H2O + H(+) = 2'-deoxyinosine + NH4(+)</text>
        <dbReference type="Rhea" id="RHEA:28190"/>
        <dbReference type="ChEBI" id="CHEBI:15377"/>
        <dbReference type="ChEBI" id="CHEBI:15378"/>
        <dbReference type="ChEBI" id="CHEBI:17256"/>
        <dbReference type="ChEBI" id="CHEBI:28938"/>
        <dbReference type="ChEBI" id="CHEBI:28997"/>
        <dbReference type="EC" id="3.5.4.4"/>
    </reaction>
    <physiologicalReaction direction="left-to-right" evidence="1">
        <dbReference type="Rhea" id="RHEA:28191"/>
    </physiologicalReaction>
</comment>
<comment type="cofactor">
    <cofactor evidence="1">
        <name>Zn(2+)</name>
        <dbReference type="ChEBI" id="CHEBI:29105"/>
    </cofactor>
    <text evidence="1">Binds 1 zinc ion per subunit.</text>
</comment>
<comment type="similarity">
    <text evidence="1">Belongs to the metallo-dependent hydrolases superfamily. Adenosine and AMP deaminases family. Adenosine deaminase subfamily.</text>
</comment>
<name>ADD_CLOPE</name>
<gene>
    <name evidence="1" type="primary">add</name>
    <name type="ordered locus">CPE2506</name>
</gene>
<keyword id="KW-0378">Hydrolase</keyword>
<keyword id="KW-0479">Metal-binding</keyword>
<keyword id="KW-0546">Nucleotide metabolism</keyword>
<keyword id="KW-1185">Reference proteome</keyword>
<keyword id="KW-0862">Zinc</keyword>
<feature type="chain" id="PRO_0000194366" description="Adenosine deaminase">
    <location>
        <begin position="1"/>
        <end position="332"/>
    </location>
</feature>
<feature type="active site" description="Proton donor" evidence="1">
    <location>
        <position position="200"/>
    </location>
</feature>
<feature type="binding site" evidence="1">
    <location>
        <position position="12"/>
    </location>
    <ligand>
        <name>Zn(2+)</name>
        <dbReference type="ChEBI" id="CHEBI:29105"/>
        <note>catalytic</note>
    </ligand>
</feature>
<feature type="binding site" evidence="1">
    <location>
        <position position="14"/>
    </location>
    <ligand>
        <name>substrate</name>
    </ligand>
</feature>
<feature type="binding site" evidence="1">
    <location>
        <position position="14"/>
    </location>
    <ligand>
        <name>Zn(2+)</name>
        <dbReference type="ChEBI" id="CHEBI:29105"/>
        <note>catalytic</note>
    </ligand>
</feature>
<feature type="binding site" evidence="1">
    <location>
        <position position="16"/>
    </location>
    <ligand>
        <name>substrate</name>
    </ligand>
</feature>
<feature type="binding site" evidence="1">
    <location>
        <position position="170"/>
    </location>
    <ligand>
        <name>substrate</name>
    </ligand>
</feature>
<feature type="binding site" evidence="1">
    <location>
        <position position="197"/>
    </location>
    <ligand>
        <name>Zn(2+)</name>
        <dbReference type="ChEBI" id="CHEBI:29105"/>
        <note>catalytic</note>
    </ligand>
</feature>
<feature type="binding site" evidence="1">
    <location>
        <position position="278"/>
    </location>
    <ligand>
        <name>Zn(2+)</name>
        <dbReference type="ChEBI" id="CHEBI:29105"/>
        <note>catalytic</note>
    </ligand>
</feature>
<feature type="site" description="Important for catalytic activity" evidence="1">
    <location>
        <position position="221"/>
    </location>
</feature>
<proteinExistence type="inferred from homology"/>
<dbReference type="EC" id="3.5.4.4" evidence="1"/>
<dbReference type="EMBL" id="BA000016">
    <property type="protein sequence ID" value="BAB82212.1"/>
    <property type="molecule type" value="Genomic_DNA"/>
</dbReference>
<dbReference type="RefSeq" id="WP_011010937.1">
    <property type="nucleotide sequence ID" value="NC_003366.1"/>
</dbReference>
<dbReference type="SMR" id="Q8XHH8"/>
<dbReference type="STRING" id="195102.gene:10491840"/>
<dbReference type="KEGG" id="cpe:CPE2506"/>
<dbReference type="HOGENOM" id="CLU_039228_0_0_9"/>
<dbReference type="Proteomes" id="UP000000818">
    <property type="component" value="Chromosome"/>
</dbReference>
<dbReference type="GO" id="GO:0005829">
    <property type="term" value="C:cytosol"/>
    <property type="evidence" value="ECO:0007669"/>
    <property type="project" value="TreeGrafter"/>
</dbReference>
<dbReference type="GO" id="GO:0046936">
    <property type="term" value="F:2'-deoxyadenosine deaminase activity"/>
    <property type="evidence" value="ECO:0007669"/>
    <property type="project" value="RHEA"/>
</dbReference>
<dbReference type="GO" id="GO:0004000">
    <property type="term" value="F:adenosine deaminase activity"/>
    <property type="evidence" value="ECO:0007669"/>
    <property type="project" value="UniProtKB-UniRule"/>
</dbReference>
<dbReference type="GO" id="GO:0008270">
    <property type="term" value="F:zinc ion binding"/>
    <property type="evidence" value="ECO:0007669"/>
    <property type="project" value="UniProtKB-UniRule"/>
</dbReference>
<dbReference type="GO" id="GO:0006154">
    <property type="term" value="P:adenosine catabolic process"/>
    <property type="evidence" value="ECO:0007669"/>
    <property type="project" value="TreeGrafter"/>
</dbReference>
<dbReference type="GO" id="GO:0043103">
    <property type="term" value="P:hypoxanthine salvage"/>
    <property type="evidence" value="ECO:0007669"/>
    <property type="project" value="TreeGrafter"/>
</dbReference>
<dbReference type="GO" id="GO:0046103">
    <property type="term" value="P:inosine biosynthetic process"/>
    <property type="evidence" value="ECO:0007669"/>
    <property type="project" value="TreeGrafter"/>
</dbReference>
<dbReference type="GO" id="GO:0009117">
    <property type="term" value="P:nucleotide metabolic process"/>
    <property type="evidence" value="ECO:0007669"/>
    <property type="project" value="UniProtKB-KW"/>
</dbReference>
<dbReference type="GO" id="GO:0009168">
    <property type="term" value="P:purine ribonucleoside monophosphate biosynthetic process"/>
    <property type="evidence" value="ECO:0007669"/>
    <property type="project" value="UniProtKB-UniRule"/>
</dbReference>
<dbReference type="CDD" id="cd01320">
    <property type="entry name" value="ADA"/>
    <property type="match status" value="1"/>
</dbReference>
<dbReference type="Gene3D" id="3.20.20.140">
    <property type="entry name" value="Metal-dependent hydrolases"/>
    <property type="match status" value="1"/>
</dbReference>
<dbReference type="HAMAP" id="MF_00540">
    <property type="entry name" value="A_deaminase"/>
    <property type="match status" value="1"/>
</dbReference>
<dbReference type="InterPro" id="IPR028893">
    <property type="entry name" value="A_deaminase"/>
</dbReference>
<dbReference type="InterPro" id="IPR001365">
    <property type="entry name" value="A_deaminase_dom"/>
</dbReference>
<dbReference type="InterPro" id="IPR006330">
    <property type="entry name" value="Ado/ade_deaminase"/>
</dbReference>
<dbReference type="InterPro" id="IPR032466">
    <property type="entry name" value="Metal_Hydrolase"/>
</dbReference>
<dbReference type="NCBIfam" id="TIGR01430">
    <property type="entry name" value="aden_deam"/>
    <property type="match status" value="1"/>
</dbReference>
<dbReference type="PANTHER" id="PTHR11409">
    <property type="entry name" value="ADENOSINE DEAMINASE"/>
    <property type="match status" value="1"/>
</dbReference>
<dbReference type="PANTHER" id="PTHR11409:SF43">
    <property type="entry name" value="ADENOSINE DEAMINASE"/>
    <property type="match status" value="1"/>
</dbReference>
<dbReference type="Pfam" id="PF00962">
    <property type="entry name" value="A_deaminase"/>
    <property type="match status" value="1"/>
</dbReference>
<dbReference type="SUPFAM" id="SSF51556">
    <property type="entry name" value="Metallo-dependent hydrolases"/>
    <property type="match status" value="1"/>
</dbReference>